<reference key="1">
    <citation type="journal article" date="2000" name="Nature">
        <title>Sequence and analysis of chromosome 3 of the plant Arabidopsis thaliana.</title>
        <authorList>
            <person name="Salanoubat M."/>
            <person name="Lemcke K."/>
            <person name="Rieger M."/>
            <person name="Ansorge W."/>
            <person name="Unseld M."/>
            <person name="Fartmann B."/>
            <person name="Valle G."/>
            <person name="Bloecker H."/>
            <person name="Perez-Alonso M."/>
            <person name="Obermaier B."/>
            <person name="Delseny M."/>
            <person name="Boutry M."/>
            <person name="Grivell L.A."/>
            <person name="Mache R."/>
            <person name="Puigdomenech P."/>
            <person name="De Simone V."/>
            <person name="Choisne N."/>
            <person name="Artiguenave F."/>
            <person name="Robert C."/>
            <person name="Brottier P."/>
            <person name="Wincker P."/>
            <person name="Cattolico L."/>
            <person name="Weissenbach J."/>
            <person name="Saurin W."/>
            <person name="Quetier F."/>
            <person name="Schaefer M."/>
            <person name="Mueller-Auer S."/>
            <person name="Gabel C."/>
            <person name="Fuchs M."/>
            <person name="Benes V."/>
            <person name="Wurmbach E."/>
            <person name="Drzonek H."/>
            <person name="Erfle H."/>
            <person name="Jordan N."/>
            <person name="Bangert S."/>
            <person name="Wiedelmann R."/>
            <person name="Kranz H."/>
            <person name="Voss H."/>
            <person name="Holland R."/>
            <person name="Brandt P."/>
            <person name="Nyakatura G."/>
            <person name="Vezzi A."/>
            <person name="D'Angelo M."/>
            <person name="Pallavicini A."/>
            <person name="Toppo S."/>
            <person name="Simionati B."/>
            <person name="Conrad A."/>
            <person name="Hornischer K."/>
            <person name="Kauer G."/>
            <person name="Loehnert T.-H."/>
            <person name="Nordsiek G."/>
            <person name="Reichelt J."/>
            <person name="Scharfe M."/>
            <person name="Schoen O."/>
            <person name="Bargues M."/>
            <person name="Terol J."/>
            <person name="Climent J."/>
            <person name="Navarro P."/>
            <person name="Collado C."/>
            <person name="Perez-Perez A."/>
            <person name="Ottenwaelder B."/>
            <person name="Duchemin D."/>
            <person name="Cooke R."/>
            <person name="Laudie M."/>
            <person name="Berger-Llauro C."/>
            <person name="Purnelle B."/>
            <person name="Masuy D."/>
            <person name="de Haan M."/>
            <person name="Maarse A.C."/>
            <person name="Alcaraz J.-P."/>
            <person name="Cottet A."/>
            <person name="Casacuberta E."/>
            <person name="Monfort A."/>
            <person name="Argiriou A."/>
            <person name="Flores M."/>
            <person name="Liguori R."/>
            <person name="Vitale D."/>
            <person name="Mannhaupt G."/>
            <person name="Haase D."/>
            <person name="Schoof H."/>
            <person name="Rudd S."/>
            <person name="Zaccaria P."/>
            <person name="Mewes H.-W."/>
            <person name="Mayer K.F.X."/>
            <person name="Kaul S."/>
            <person name="Town C.D."/>
            <person name="Koo H.L."/>
            <person name="Tallon L.J."/>
            <person name="Jenkins J."/>
            <person name="Rooney T."/>
            <person name="Rizzo M."/>
            <person name="Walts A."/>
            <person name="Utterback T."/>
            <person name="Fujii C.Y."/>
            <person name="Shea T.P."/>
            <person name="Creasy T.H."/>
            <person name="Haas B."/>
            <person name="Maiti R."/>
            <person name="Wu D."/>
            <person name="Peterson J."/>
            <person name="Van Aken S."/>
            <person name="Pai G."/>
            <person name="Militscher J."/>
            <person name="Sellers P."/>
            <person name="Gill J.E."/>
            <person name="Feldblyum T.V."/>
            <person name="Preuss D."/>
            <person name="Lin X."/>
            <person name="Nierman W.C."/>
            <person name="Salzberg S.L."/>
            <person name="White O."/>
            <person name="Venter J.C."/>
            <person name="Fraser C.M."/>
            <person name="Kaneko T."/>
            <person name="Nakamura Y."/>
            <person name="Sato S."/>
            <person name="Kato T."/>
            <person name="Asamizu E."/>
            <person name="Sasamoto S."/>
            <person name="Kimura T."/>
            <person name="Idesawa K."/>
            <person name="Kawashima K."/>
            <person name="Kishida Y."/>
            <person name="Kiyokawa C."/>
            <person name="Kohara M."/>
            <person name="Matsumoto M."/>
            <person name="Matsuno A."/>
            <person name="Muraki A."/>
            <person name="Nakayama S."/>
            <person name="Nakazaki N."/>
            <person name="Shinpo S."/>
            <person name="Takeuchi C."/>
            <person name="Wada T."/>
            <person name="Watanabe A."/>
            <person name="Yamada M."/>
            <person name="Yasuda M."/>
            <person name="Tabata S."/>
        </authorList>
    </citation>
    <scope>NUCLEOTIDE SEQUENCE [LARGE SCALE GENOMIC DNA]</scope>
    <source>
        <strain>cv. Columbia</strain>
    </source>
</reference>
<reference key="2">
    <citation type="journal article" date="2017" name="Plant J.">
        <title>Araport11: a complete reannotation of the Arabidopsis thaliana reference genome.</title>
        <authorList>
            <person name="Cheng C.Y."/>
            <person name="Krishnakumar V."/>
            <person name="Chan A.P."/>
            <person name="Thibaud-Nissen F."/>
            <person name="Schobel S."/>
            <person name="Town C.D."/>
        </authorList>
    </citation>
    <scope>GENOME REANNOTATION</scope>
    <source>
        <strain>cv. Columbia</strain>
    </source>
</reference>
<reference key="3">
    <citation type="journal article" date="2003" name="Science">
        <title>Empirical analysis of transcriptional activity in the Arabidopsis genome.</title>
        <authorList>
            <person name="Yamada K."/>
            <person name="Lim J."/>
            <person name="Dale J.M."/>
            <person name="Chen H."/>
            <person name="Shinn P."/>
            <person name="Palm C.J."/>
            <person name="Southwick A.M."/>
            <person name="Wu H.C."/>
            <person name="Kim C.J."/>
            <person name="Nguyen M."/>
            <person name="Pham P.K."/>
            <person name="Cheuk R.F."/>
            <person name="Karlin-Newmann G."/>
            <person name="Liu S.X."/>
            <person name="Lam B."/>
            <person name="Sakano H."/>
            <person name="Wu T."/>
            <person name="Yu G."/>
            <person name="Miranda M."/>
            <person name="Quach H.L."/>
            <person name="Tripp M."/>
            <person name="Chang C.H."/>
            <person name="Lee J.M."/>
            <person name="Toriumi M.J."/>
            <person name="Chan M.M."/>
            <person name="Tang C.C."/>
            <person name="Onodera C.S."/>
            <person name="Deng J.M."/>
            <person name="Akiyama K."/>
            <person name="Ansari Y."/>
            <person name="Arakawa T."/>
            <person name="Banh J."/>
            <person name="Banno F."/>
            <person name="Bowser L."/>
            <person name="Brooks S.Y."/>
            <person name="Carninci P."/>
            <person name="Chao Q."/>
            <person name="Choy N."/>
            <person name="Enju A."/>
            <person name="Goldsmith A.D."/>
            <person name="Gurjal M."/>
            <person name="Hansen N.F."/>
            <person name="Hayashizaki Y."/>
            <person name="Johnson-Hopson C."/>
            <person name="Hsuan V.W."/>
            <person name="Iida K."/>
            <person name="Karnes M."/>
            <person name="Khan S."/>
            <person name="Koesema E."/>
            <person name="Ishida J."/>
            <person name="Jiang P.X."/>
            <person name="Jones T."/>
            <person name="Kawai J."/>
            <person name="Kamiya A."/>
            <person name="Meyers C."/>
            <person name="Nakajima M."/>
            <person name="Narusaka M."/>
            <person name="Seki M."/>
            <person name="Sakurai T."/>
            <person name="Satou M."/>
            <person name="Tamse R."/>
            <person name="Vaysberg M."/>
            <person name="Wallender E.K."/>
            <person name="Wong C."/>
            <person name="Yamamura Y."/>
            <person name="Yuan S."/>
            <person name="Shinozaki K."/>
            <person name="Davis R.W."/>
            <person name="Theologis A."/>
            <person name="Ecker J.R."/>
        </authorList>
    </citation>
    <scope>NUCLEOTIDE SEQUENCE [LARGE SCALE MRNA] (ISOFORM 1)</scope>
    <source>
        <strain>cv. Columbia</strain>
    </source>
</reference>
<reference key="4">
    <citation type="submission" date="2002-03" db="EMBL/GenBank/DDBJ databases">
        <title>Full-length cDNA from Arabidopsis thaliana.</title>
        <authorList>
            <person name="Brover V.V."/>
            <person name="Troukhan M.E."/>
            <person name="Alexandrov N.A."/>
            <person name="Lu Y.-P."/>
            <person name="Flavell R.B."/>
            <person name="Feldmann K.A."/>
        </authorList>
    </citation>
    <scope>NUCLEOTIDE SEQUENCE [LARGE SCALE MRNA] (ISOFORM 2)</scope>
</reference>
<reference key="5">
    <citation type="submission" date="2006-12" db="EMBL/GenBank/DDBJ databases">
        <title>Arabidopsis ORF clones.</title>
        <authorList>
            <person name="Bautista V.R."/>
            <person name="Kim C.J."/>
            <person name="Chen H."/>
            <person name="Quinitio C."/>
            <person name="Ecker J.R."/>
        </authorList>
    </citation>
    <scope>NUCLEOTIDE SEQUENCE [LARGE SCALE MRNA] (ISOFORM 2)</scope>
    <source>
        <strain>cv. Columbia</strain>
    </source>
</reference>
<reference key="6">
    <citation type="journal article" date="2004" name="Carbohydr. Res.">
        <title>Pectin methylesterases: sequence-structural features and phylogenetic relationships.</title>
        <authorList>
            <person name="Markovic O."/>
            <person name="Janecek S."/>
        </authorList>
    </citation>
    <scope>GENE FAMILY</scope>
    <scope>NOMENCLATURE</scope>
</reference>
<reference key="7">
    <citation type="journal article" date="2006" name="Planta">
        <title>Comprehensive expression profiling of the pectin methylesterase gene family during silique development in Arabidopsis thaliana.</title>
        <authorList>
            <person name="Louvet R."/>
            <person name="Cavel E."/>
            <person name="Gutierrez L."/>
            <person name="Guenin S."/>
            <person name="Roger D."/>
            <person name="Gillet F."/>
            <person name="Guerineau F."/>
            <person name="Pelloux J."/>
        </authorList>
    </citation>
    <scope>TISSUE SPECIFICITY</scope>
    <scope>DEVELOPMENTAL STAGE</scope>
</reference>
<gene>
    <name type="primary">PME25</name>
    <name type="synonym">ARATH25</name>
    <name type="ordered locus">At3g10720</name>
    <name type="ORF">T7M13.20</name>
</gene>
<protein>
    <recommendedName>
        <fullName>Probable pectinesterase/pectinesterase inhibitor 25</fullName>
    </recommendedName>
    <domain>
        <recommendedName>
            <fullName>Pectinesterase inhibitor 25</fullName>
        </recommendedName>
        <alternativeName>
            <fullName>Pectin methylesterase inhibitor 25</fullName>
        </alternativeName>
    </domain>
    <domain>
        <recommendedName>
            <fullName>Pectinesterase 25</fullName>
            <shortName>PE 25</shortName>
            <ecNumber>3.1.1.11</ecNumber>
        </recommendedName>
        <alternativeName>
            <fullName>Pectin methylesterase 25</fullName>
            <shortName>AtPME25</shortName>
        </alternativeName>
    </domain>
</protein>
<proteinExistence type="evidence at transcript level"/>
<evidence type="ECO:0000250" key="1"/>
<evidence type="ECO:0000255" key="2"/>
<evidence type="ECO:0000255" key="3">
    <source>
        <dbReference type="PROSITE-ProRule" id="PRU10040"/>
    </source>
</evidence>
<evidence type="ECO:0000256" key="4">
    <source>
        <dbReference type="SAM" id="MobiDB-lite"/>
    </source>
</evidence>
<evidence type="ECO:0000269" key="5">
    <source>
    </source>
</evidence>
<evidence type="ECO:0000303" key="6">
    <source ref="4"/>
</evidence>
<evidence type="ECO:0000303" key="7">
    <source ref="5"/>
</evidence>
<evidence type="ECO:0000305" key="8"/>
<organism>
    <name type="scientific">Arabidopsis thaliana</name>
    <name type="common">Mouse-ear cress</name>
    <dbReference type="NCBI Taxonomy" id="3702"/>
    <lineage>
        <taxon>Eukaryota</taxon>
        <taxon>Viridiplantae</taxon>
        <taxon>Streptophyta</taxon>
        <taxon>Embryophyta</taxon>
        <taxon>Tracheophyta</taxon>
        <taxon>Spermatophyta</taxon>
        <taxon>Magnoliopsida</taxon>
        <taxon>eudicotyledons</taxon>
        <taxon>Gunneridae</taxon>
        <taxon>Pentapetalae</taxon>
        <taxon>rosids</taxon>
        <taxon>malvids</taxon>
        <taxon>Brassicales</taxon>
        <taxon>Brassicaceae</taxon>
        <taxon>Camelineae</taxon>
        <taxon>Arabidopsis</taxon>
    </lineage>
</organism>
<keyword id="KW-0025">Alternative splicing</keyword>
<keyword id="KW-0063">Aspartyl esterase</keyword>
<keyword id="KW-0134">Cell wall</keyword>
<keyword id="KW-0961">Cell wall biogenesis/degradation</keyword>
<keyword id="KW-1015">Disulfide bond</keyword>
<keyword id="KW-0325">Glycoprotein</keyword>
<keyword id="KW-0378">Hydrolase</keyword>
<keyword id="KW-1185">Reference proteome</keyword>
<keyword id="KW-0964">Secreted</keyword>
<keyword id="KW-0732">Signal</keyword>
<sequence length="619" mass="67956">MKMQTLNFTSSLLFLSFIFLSCALLISSQQSPSQPHSEPPSQLPFEPPVESPFFPPSQPPIFVPPSQPPSLPPSQSQSPSLACKSTPYPKLCRTILNAVKSSPSDPYRYGKFTIKQCLKQASRLSKVITSYARRVESKPGSATAEEIGAVADCGELSELSVNYLETVTTELKTAQVMTAALVEHVNSLLSGVVTNQQTCLDGLVEAKSGFAAAIGSPMGNLTRLYSISLGLVSHALNRNLKRFKASKGKILGGGNSTYREPLETLIKGLRKTCDNDKDCRKTSRNLGELGETSGGSILVSKAVIVGPFKSDNFTTITDAIAAAPNNTRPEDGYFVIYAREGVYEEYIVVPINKKNLMLMGDGINKTIITGNHNVVDGWTTYNCSSFAVVGERFMAVDVTFRNTAGPEKHQAVALRNNAEGSSFYRCSFEGYQDTLYVHSLRQFYRECDIYGTVDFIFGNAAAIFQNCNIYARKPMAKQKNAITAHGRLDPNQNTGISIINCTIKAAPDLAAEPKSAMTFLGRPWKPYSRTVFMQSYISDIVQPVGWLEWNGTIGLDTIYYGEYSNFGPGANTNQRVQWLGYNLLNLAEAMNFTVYNFTMGDTWLPQTDIPFYGGLLSKE</sequence>
<feature type="signal peptide" evidence="2">
    <location>
        <begin position="1"/>
        <end position="23"/>
    </location>
</feature>
<feature type="chain" id="PRO_0000371680" description="Probable pectinesterase/pectinesterase inhibitor 25">
    <location>
        <begin position="24"/>
        <end position="619"/>
    </location>
</feature>
<feature type="region of interest" description="Disordered" evidence="4">
    <location>
        <begin position="31"/>
        <end position="84"/>
    </location>
</feature>
<feature type="region of interest" description="Pectinesterase inhibitor 25">
    <location>
        <begin position="73"/>
        <end position="231"/>
    </location>
</feature>
<feature type="region of interest" description="Pectinesterase 25">
    <location>
        <begin position="302"/>
        <end position="601"/>
    </location>
</feature>
<feature type="compositionally biased region" description="Pro residues" evidence="4">
    <location>
        <begin position="37"/>
        <end position="72"/>
    </location>
</feature>
<feature type="active site" description="Proton donor; for pectinesterase activity" evidence="3">
    <location>
        <position position="433"/>
    </location>
</feature>
<feature type="active site" description="Nucleophile; for pectinesterase activity" evidence="3">
    <location>
        <position position="454"/>
    </location>
</feature>
<feature type="binding site" evidence="1">
    <location>
        <position position="380"/>
    </location>
    <ligand>
        <name>substrate</name>
        <note>for pectinesterase activity</note>
    </ligand>
</feature>
<feature type="binding site" evidence="1">
    <location>
        <position position="410"/>
    </location>
    <ligand>
        <name>substrate</name>
        <note>for pectinesterase activity</note>
    </ligand>
</feature>
<feature type="binding site" evidence="1">
    <location>
        <position position="522"/>
    </location>
    <ligand>
        <name>substrate</name>
        <note>for pectinesterase activity</note>
    </ligand>
</feature>
<feature type="binding site" evidence="1">
    <location>
        <position position="524"/>
    </location>
    <ligand>
        <name>substrate</name>
        <note>for pectinesterase activity</note>
    </ligand>
</feature>
<feature type="site" description="Transition state stabilizer" evidence="1">
    <location>
        <position position="432"/>
    </location>
</feature>
<feature type="glycosylation site" description="N-linked (GlcNAc...) asparagine" evidence="2">
    <location>
        <position position="220"/>
    </location>
</feature>
<feature type="glycosylation site" description="N-linked (GlcNAc...) asparagine" evidence="2">
    <location>
        <position position="255"/>
    </location>
</feature>
<feature type="glycosylation site" description="N-linked (GlcNAc...) asparagine" evidence="2">
    <location>
        <position position="312"/>
    </location>
</feature>
<feature type="glycosylation site" description="N-linked (GlcNAc...) asparagine" evidence="2">
    <location>
        <position position="325"/>
    </location>
</feature>
<feature type="glycosylation site" description="N-linked (GlcNAc...) asparagine" evidence="2">
    <location>
        <position position="364"/>
    </location>
</feature>
<feature type="glycosylation site" description="N-linked (GlcNAc...) asparagine" evidence="2">
    <location>
        <position position="382"/>
    </location>
</feature>
<feature type="glycosylation site" description="N-linked (GlcNAc...) asparagine" evidence="2">
    <location>
        <position position="500"/>
    </location>
</feature>
<feature type="glycosylation site" description="N-linked (GlcNAc...) asparagine" evidence="2">
    <location>
        <position position="550"/>
    </location>
</feature>
<feature type="glycosylation site" description="N-linked (GlcNAc...) asparagine" evidence="2">
    <location>
        <position position="591"/>
    </location>
</feature>
<feature type="glycosylation site" description="N-linked (GlcNAc...) asparagine" evidence="2">
    <location>
        <position position="596"/>
    </location>
</feature>
<feature type="disulfide bond" evidence="1">
    <location>
        <begin position="447"/>
        <end position="467"/>
    </location>
</feature>
<feature type="splice variant" id="VSP_037088" description="In isoform 2." evidence="6 7">
    <location>
        <begin position="1"/>
        <end position="356"/>
    </location>
</feature>
<feature type="sequence conflict" description="In Ref. 4; AAM67242." evidence="8" ref="4">
    <original>M</original>
    <variation>I</variation>
    <location>
        <position position="359"/>
    </location>
</feature>
<feature type="sequence conflict" description="In Ref. 4; AAM67242." evidence="8" ref="4">
    <original>N</original>
    <variation>K</variation>
    <location>
        <position position="364"/>
    </location>
</feature>
<feature type="sequence conflict" description="In Ref. 4; AAM67242." evidence="8" ref="4">
    <original>E</original>
    <variation>D</variation>
    <location>
        <position position="512"/>
    </location>
</feature>
<comment type="function">
    <text evidence="1">Acts in the modification of cell walls via demethylesterification of cell wall pectin.</text>
</comment>
<comment type="catalytic activity">
    <reaction>
        <text>[(1-&gt;4)-alpha-D-galacturonosyl methyl ester](n) + n H2O = [(1-&gt;4)-alpha-D-galacturonosyl](n) + n methanol + n H(+)</text>
        <dbReference type="Rhea" id="RHEA:22380"/>
        <dbReference type="Rhea" id="RHEA-COMP:14570"/>
        <dbReference type="Rhea" id="RHEA-COMP:14573"/>
        <dbReference type="ChEBI" id="CHEBI:15377"/>
        <dbReference type="ChEBI" id="CHEBI:15378"/>
        <dbReference type="ChEBI" id="CHEBI:17790"/>
        <dbReference type="ChEBI" id="CHEBI:140522"/>
        <dbReference type="ChEBI" id="CHEBI:140523"/>
        <dbReference type="EC" id="3.1.1.11"/>
    </reaction>
</comment>
<comment type="pathway">
    <text>Glycan metabolism; pectin degradation; 2-dehydro-3-deoxy-D-gluconate from pectin: step 1/5.</text>
</comment>
<comment type="subcellular location">
    <subcellularLocation>
        <location evidence="1">Secreted</location>
        <location evidence="1">Cell wall</location>
    </subcellularLocation>
</comment>
<comment type="alternative products">
    <event type="alternative splicing"/>
    <isoform>
        <id>Q94CB1-1</id>
        <name>1</name>
        <sequence type="displayed"/>
    </isoform>
    <isoform>
        <id>Q94CB1-2</id>
        <name>2</name>
        <sequence type="described" ref="VSP_037088"/>
    </isoform>
</comment>
<comment type="tissue specificity">
    <text evidence="5">Expressed in siliques.</text>
</comment>
<comment type="developmental stage">
    <text evidence="5">Expressed throughout silique development.</text>
</comment>
<comment type="miscellaneous">
    <text>The PMEI region may act as an autoinhibitory domain and prevent untimely PME activity during transport.</text>
</comment>
<comment type="similarity">
    <text evidence="8">In the N-terminal section; belongs to the PMEI family.</text>
</comment>
<comment type="similarity">
    <text evidence="8">In the C-terminal section; belongs to the pectinesterase family.</text>
</comment>
<comment type="sequence caution" evidence="8">
    <conflict type="erroneous initiation">
        <sequence resource="EMBL-CDS" id="AAF19577"/>
    </conflict>
</comment>
<dbReference type="EC" id="3.1.1.11"/>
<dbReference type="EMBL" id="AC011708">
    <property type="protein sequence ID" value="AAF19577.1"/>
    <property type="status" value="ALT_INIT"/>
    <property type="molecule type" value="Genomic_DNA"/>
</dbReference>
<dbReference type="EMBL" id="CP002686">
    <property type="protein sequence ID" value="AEE74946.1"/>
    <property type="molecule type" value="Genomic_DNA"/>
</dbReference>
<dbReference type="EMBL" id="CP002686">
    <property type="protein sequence ID" value="AEE74947.1"/>
    <property type="molecule type" value="Genomic_DNA"/>
</dbReference>
<dbReference type="EMBL" id="AY034996">
    <property type="protein sequence ID" value="AAK59501.1"/>
    <property type="molecule type" value="mRNA"/>
</dbReference>
<dbReference type="EMBL" id="AY084383">
    <property type="protein sequence ID" value="AAM67242.1"/>
    <property type="molecule type" value="mRNA"/>
</dbReference>
<dbReference type="EMBL" id="BT029534">
    <property type="protein sequence ID" value="ABL66790.1"/>
    <property type="molecule type" value="mRNA"/>
</dbReference>
<dbReference type="RefSeq" id="NP_187683.2">
    <molecule id="Q94CB1-1"/>
    <property type="nucleotide sequence ID" value="NM_111908.5"/>
</dbReference>
<dbReference type="RefSeq" id="NP_566379.1">
    <molecule id="Q94CB1-2"/>
    <property type="nucleotide sequence ID" value="NM_111909.2"/>
</dbReference>
<dbReference type="SMR" id="Q94CB1"/>
<dbReference type="FunCoup" id="Q94CB1">
    <property type="interactions" value="161"/>
</dbReference>
<dbReference type="STRING" id="3702.Q94CB1"/>
<dbReference type="GlyCosmos" id="Q94CB1">
    <property type="glycosylation" value="10 sites, No reported glycans"/>
</dbReference>
<dbReference type="GlyGen" id="Q94CB1">
    <property type="glycosylation" value="10 sites"/>
</dbReference>
<dbReference type="PaxDb" id="3702-AT3G10720.2"/>
<dbReference type="ProteomicsDB" id="234933">
    <molecule id="Q94CB1-1"/>
</dbReference>
<dbReference type="EnsemblPlants" id="AT3G10720.1">
    <molecule id="Q94CB1-2"/>
    <property type="protein sequence ID" value="AT3G10720.1"/>
    <property type="gene ID" value="AT3G10720"/>
</dbReference>
<dbReference type="EnsemblPlants" id="AT3G10720.2">
    <molecule id="Q94CB1-1"/>
    <property type="protein sequence ID" value="AT3G10720.2"/>
    <property type="gene ID" value="AT3G10720"/>
</dbReference>
<dbReference type="GeneID" id="820241"/>
<dbReference type="Gramene" id="AT3G10720.1">
    <molecule id="Q94CB1-2"/>
    <property type="protein sequence ID" value="AT3G10720.1"/>
    <property type="gene ID" value="AT3G10720"/>
</dbReference>
<dbReference type="Gramene" id="AT3G10720.2">
    <molecule id="Q94CB1-1"/>
    <property type="protein sequence ID" value="AT3G10720.2"/>
    <property type="gene ID" value="AT3G10720"/>
</dbReference>
<dbReference type="KEGG" id="ath:AT3G10720"/>
<dbReference type="Araport" id="AT3G10720"/>
<dbReference type="TAIR" id="AT3G10720"/>
<dbReference type="eggNOG" id="ENOG502QT2B">
    <property type="taxonomic scope" value="Eukaryota"/>
</dbReference>
<dbReference type="HOGENOM" id="CLU_012243_9_1_1"/>
<dbReference type="InParanoid" id="Q94CB1"/>
<dbReference type="PhylomeDB" id="Q94CB1"/>
<dbReference type="BioCyc" id="ARA:AT3G10720-MONOMER"/>
<dbReference type="UniPathway" id="UPA00545">
    <property type="reaction ID" value="UER00823"/>
</dbReference>
<dbReference type="PRO" id="PR:Q94CB1"/>
<dbReference type="Proteomes" id="UP000006548">
    <property type="component" value="Chromosome 3"/>
</dbReference>
<dbReference type="ExpressionAtlas" id="Q94CB1">
    <property type="expression patterns" value="baseline and differential"/>
</dbReference>
<dbReference type="GO" id="GO:0005576">
    <property type="term" value="C:extracellular region"/>
    <property type="evidence" value="ECO:0007669"/>
    <property type="project" value="UniProtKB-KW"/>
</dbReference>
<dbReference type="GO" id="GO:0004857">
    <property type="term" value="F:enzyme inhibitor activity"/>
    <property type="evidence" value="ECO:0007669"/>
    <property type="project" value="InterPro"/>
</dbReference>
<dbReference type="GO" id="GO:0030599">
    <property type="term" value="F:pectinesterase activity"/>
    <property type="evidence" value="ECO:0007669"/>
    <property type="project" value="UniProtKB-EC"/>
</dbReference>
<dbReference type="GO" id="GO:0042545">
    <property type="term" value="P:cell wall modification"/>
    <property type="evidence" value="ECO:0007669"/>
    <property type="project" value="InterPro"/>
</dbReference>
<dbReference type="GO" id="GO:0045490">
    <property type="term" value="P:pectin catabolic process"/>
    <property type="evidence" value="ECO:0007669"/>
    <property type="project" value="UniProtKB-UniPathway"/>
</dbReference>
<dbReference type="CDD" id="cd15798">
    <property type="entry name" value="PMEI-like_3"/>
    <property type="match status" value="1"/>
</dbReference>
<dbReference type="FunFam" id="2.160.20.10:FF:000001">
    <property type="entry name" value="Pectinesterase"/>
    <property type="match status" value="1"/>
</dbReference>
<dbReference type="Gene3D" id="1.20.140.40">
    <property type="entry name" value="Invertase/pectin methylesterase inhibitor family protein"/>
    <property type="match status" value="1"/>
</dbReference>
<dbReference type="Gene3D" id="2.160.20.10">
    <property type="entry name" value="Single-stranded right-handed beta-helix, Pectin lyase-like"/>
    <property type="match status" value="1"/>
</dbReference>
<dbReference type="InterPro" id="IPR035513">
    <property type="entry name" value="Invertase/methylesterase_inhib"/>
</dbReference>
<dbReference type="InterPro" id="IPR012334">
    <property type="entry name" value="Pectin_lyas_fold"/>
</dbReference>
<dbReference type="InterPro" id="IPR011050">
    <property type="entry name" value="Pectin_lyase_fold/virulence"/>
</dbReference>
<dbReference type="InterPro" id="IPR033131">
    <property type="entry name" value="Pectinesterase_Asp_AS"/>
</dbReference>
<dbReference type="InterPro" id="IPR000070">
    <property type="entry name" value="Pectinesterase_cat"/>
</dbReference>
<dbReference type="InterPro" id="IPR006501">
    <property type="entry name" value="Pectinesterase_inhib_dom"/>
</dbReference>
<dbReference type="PANTHER" id="PTHR31707">
    <property type="entry name" value="PECTINESTERASE"/>
    <property type="match status" value="1"/>
</dbReference>
<dbReference type="Pfam" id="PF01095">
    <property type="entry name" value="Pectinesterase"/>
    <property type="match status" value="1"/>
</dbReference>
<dbReference type="Pfam" id="PF04043">
    <property type="entry name" value="PMEI"/>
    <property type="match status" value="1"/>
</dbReference>
<dbReference type="SMART" id="SM00856">
    <property type="entry name" value="PMEI"/>
    <property type="match status" value="1"/>
</dbReference>
<dbReference type="SUPFAM" id="SSF51126">
    <property type="entry name" value="Pectin lyase-like"/>
    <property type="match status" value="1"/>
</dbReference>
<dbReference type="SUPFAM" id="SSF101148">
    <property type="entry name" value="Plant invertase/pectin methylesterase inhibitor"/>
    <property type="match status" value="1"/>
</dbReference>
<dbReference type="PROSITE" id="PS00503">
    <property type="entry name" value="PECTINESTERASE_2"/>
    <property type="match status" value="1"/>
</dbReference>
<name>PME25_ARATH</name>
<accession>Q94CB1</accession>
<accession>Q3EB96</accession>
<accession>Q8LGA3</accession>
<accession>Q9SG78</accession>